<proteinExistence type="inferred from homology"/>
<protein>
    <recommendedName>
        <fullName evidence="2">Purine nucleoside phosphorylase DeoD-type</fullName>
        <shortName evidence="2">PNP</shortName>
        <ecNumber evidence="2">2.4.2.1</ecNumber>
    </recommendedName>
</protein>
<comment type="function">
    <text evidence="2">Catalyzes the reversible phosphorolytic breakdown of the N-glycosidic bond in the beta-(deoxy)ribonucleoside molecules, with the formation of the corresponding free purine bases and pentose-1-phosphate.</text>
</comment>
<comment type="catalytic activity">
    <reaction evidence="2">
        <text>a purine D-ribonucleoside + phosphate = a purine nucleobase + alpha-D-ribose 1-phosphate</text>
        <dbReference type="Rhea" id="RHEA:19805"/>
        <dbReference type="ChEBI" id="CHEBI:26386"/>
        <dbReference type="ChEBI" id="CHEBI:43474"/>
        <dbReference type="ChEBI" id="CHEBI:57720"/>
        <dbReference type="ChEBI" id="CHEBI:142355"/>
        <dbReference type="EC" id="2.4.2.1"/>
    </reaction>
</comment>
<comment type="catalytic activity">
    <reaction evidence="2">
        <text>a purine 2'-deoxy-D-ribonucleoside + phosphate = a purine nucleobase + 2-deoxy-alpha-D-ribose 1-phosphate</text>
        <dbReference type="Rhea" id="RHEA:36431"/>
        <dbReference type="ChEBI" id="CHEBI:26386"/>
        <dbReference type="ChEBI" id="CHEBI:43474"/>
        <dbReference type="ChEBI" id="CHEBI:57259"/>
        <dbReference type="ChEBI" id="CHEBI:142361"/>
        <dbReference type="EC" id="2.4.2.1"/>
    </reaction>
</comment>
<comment type="subunit">
    <text evidence="2">Homohexamer; trimer of homodimers.</text>
</comment>
<comment type="similarity">
    <text evidence="2">Belongs to the PNP/UDP phosphorylase family.</text>
</comment>
<name>DEOD_HELPG</name>
<evidence type="ECO:0000250" key="1">
    <source>
        <dbReference type="UniProtKB" id="P50389"/>
    </source>
</evidence>
<evidence type="ECO:0000255" key="2">
    <source>
        <dbReference type="HAMAP-Rule" id="MF_01627"/>
    </source>
</evidence>
<dbReference type="EC" id="2.4.2.1" evidence="2"/>
<dbReference type="EMBL" id="CP001173">
    <property type="protein sequence ID" value="ACI27871.1"/>
    <property type="molecule type" value="Genomic_DNA"/>
</dbReference>
<dbReference type="RefSeq" id="WP_000187664.1">
    <property type="nucleotide sequence ID" value="NC_011333.1"/>
</dbReference>
<dbReference type="SMR" id="B5Z8H2"/>
<dbReference type="KEGG" id="hpg:HPG27_1121"/>
<dbReference type="HOGENOM" id="CLU_068457_2_0_7"/>
<dbReference type="Proteomes" id="UP000001735">
    <property type="component" value="Chromosome"/>
</dbReference>
<dbReference type="GO" id="GO:0005829">
    <property type="term" value="C:cytosol"/>
    <property type="evidence" value="ECO:0007669"/>
    <property type="project" value="TreeGrafter"/>
</dbReference>
<dbReference type="GO" id="GO:0004731">
    <property type="term" value="F:purine-nucleoside phosphorylase activity"/>
    <property type="evidence" value="ECO:0007669"/>
    <property type="project" value="UniProtKB-EC"/>
</dbReference>
<dbReference type="GO" id="GO:0006152">
    <property type="term" value="P:purine nucleoside catabolic process"/>
    <property type="evidence" value="ECO:0007669"/>
    <property type="project" value="TreeGrafter"/>
</dbReference>
<dbReference type="CDD" id="cd09006">
    <property type="entry name" value="PNP_EcPNPI-like"/>
    <property type="match status" value="1"/>
</dbReference>
<dbReference type="Gene3D" id="3.40.50.1580">
    <property type="entry name" value="Nucleoside phosphorylase domain"/>
    <property type="match status" value="1"/>
</dbReference>
<dbReference type="HAMAP" id="MF_01627">
    <property type="entry name" value="Pur_nucleosid_phosp"/>
    <property type="match status" value="1"/>
</dbReference>
<dbReference type="InterPro" id="IPR004402">
    <property type="entry name" value="DeoD-type"/>
</dbReference>
<dbReference type="InterPro" id="IPR018016">
    <property type="entry name" value="Nucleoside_phosphorylase_CS"/>
</dbReference>
<dbReference type="InterPro" id="IPR000845">
    <property type="entry name" value="Nucleoside_phosphorylase_d"/>
</dbReference>
<dbReference type="InterPro" id="IPR035994">
    <property type="entry name" value="Nucleoside_phosphorylase_sf"/>
</dbReference>
<dbReference type="NCBIfam" id="TIGR00107">
    <property type="entry name" value="deoD"/>
    <property type="match status" value="1"/>
</dbReference>
<dbReference type="NCBIfam" id="NF004489">
    <property type="entry name" value="PRK05819.1"/>
    <property type="match status" value="1"/>
</dbReference>
<dbReference type="PANTHER" id="PTHR43691:SF11">
    <property type="entry name" value="FI09636P-RELATED"/>
    <property type="match status" value="1"/>
</dbReference>
<dbReference type="PANTHER" id="PTHR43691">
    <property type="entry name" value="URIDINE PHOSPHORYLASE"/>
    <property type="match status" value="1"/>
</dbReference>
<dbReference type="Pfam" id="PF01048">
    <property type="entry name" value="PNP_UDP_1"/>
    <property type="match status" value="1"/>
</dbReference>
<dbReference type="SUPFAM" id="SSF53167">
    <property type="entry name" value="Purine and uridine phosphorylases"/>
    <property type="match status" value="1"/>
</dbReference>
<dbReference type="PROSITE" id="PS01232">
    <property type="entry name" value="PNP_UDP_1"/>
    <property type="match status" value="1"/>
</dbReference>
<gene>
    <name evidence="2" type="primary">deoD</name>
    <name type="ordered locus">HPG27_1121</name>
</gene>
<organism>
    <name type="scientific">Helicobacter pylori (strain G27)</name>
    <dbReference type="NCBI Taxonomy" id="563041"/>
    <lineage>
        <taxon>Bacteria</taxon>
        <taxon>Pseudomonadati</taxon>
        <taxon>Campylobacterota</taxon>
        <taxon>Epsilonproteobacteria</taxon>
        <taxon>Campylobacterales</taxon>
        <taxon>Helicobacteraceae</taxon>
        <taxon>Helicobacter</taxon>
    </lineage>
</organism>
<feature type="chain" id="PRO_1000186201" description="Purine nucleoside phosphorylase DeoD-type">
    <location>
        <begin position="1"/>
        <end position="233"/>
    </location>
</feature>
<feature type="active site" description="Proton donor" evidence="2">
    <location>
        <position position="204"/>
    </location>
</feature>
<feature type="binding site" evidence="1">
    <location>
        <position position="4"/>
    </location>
    <ligand>
        <name>a purine D-ribonucleoside</name>
        <dbReference type="ChEBI" id="CHEBI:142355"/>
        <note>ligand shared between dimeric partners</note>
    </ligand>
</feature>
<feature type="binding site" description="in other chain" evidence="1">
    <location>
        <position position="20"/>
    </location>
    <ligand>
        <name>phosphate</name>
        <dbReference type="ChEBI" id="CHEBI:43474"/>
        <note>ligand shared between dimeric partners</note>
    </ligand>
</feature>
<feature type="binding site" description="in other chain" evidence="1">
    <location>
        <position position="24"/>
    </location>
    <ligand>
        <name>phosphate</name>
        <dbReference type="ChEBI" id="CHEBI:43474"/>
        <note>ligand shared between dimeric partners</note>
    </ligand>
</feature>
<feature type="binding site" evidence="1">
    <location>
        <position position="43"/>
    </location>
    <ligand>
        <name>phosphate</name>
        <dbReference type="ChEBI" id="CHEBI:43474"/>
        <note>ligand shared between dimeric partners</note>
    </ligand>
</feature>
<feature type="binding site" description="in other chain" evidence="1">
    <location>
        <begin position="87"/>
        <end position="90"/>
    </location>
    <ligand>
        <name>phosphate</name>
        <dbReference type="ChEBI" id="CHEBI:43474"/>
        <note>ligand shared between dimeric partners</note>
    </ligand>
</feature>
<feature type="binding site" description="in other chain" evidence="1">
    <location>
        <begin position="179"/>
        <end position="181"/>
    </location>
    <ligand>
        <name>a purine D-ribonucleoside</name>
        <dbReference type="ChEBI" id="CHEBI:142355"/>
        <note>ligand shared between dimeric partners</note>
    </ligand>
</feature>
<feature type="binding site" description="in other chain" evidence="1">
    <location>
        <begin position="203"/>
        <end position="204"/>
    </location>
    <ligand>
        <name>a purine D-ribonucleoside</name>
        <dbReference type="ChEBI" id="CHEBI:142355"/>
        <note>ligand shared between dimeric partners</note>
    </ligand>
</feature>
<feature type="site" description="Important for catalytic activity" evidence="2">
    <location>
        <position position="217"/>
    </location>
</feature>
<reference key="1">
    <citation type="journal article" date="2009" name="J. Bacteriol.">
        <title>The complete genome sequence of Helicobacter pylori strain G27.</title>
        <authorList>
            <person name="Baltrus D.A."/>
            <person name="Amieva M.R."/>
            <person name="Covacci A."/>
            <person name="Lowe T.M."/>
            <person name="Merrell D.S."/>
            <person name="Ottemann K.M."/>
            <person name="Stein M."/>
            <person name="Salama N.R."/>
            <person name="Guillemin K."/>
        </authorList>
    </citation>
    <scope>NUCLEOTIDE SEQUENCE [LARGE SCALE GENOMIC DNA]</scope>
    <source>
        <strain>G27</strain>
    </source>
</reference>
<keyword id="KW-0328">Glycosyltransferase</keyword>
<keyword id="KW-1185">Reference proteome</keyword>
<keyword id="KW-0808">Transferase</keyword>
<accession>B5Z8H2</accession>
<sequence>MTPHINAKIGDFYPQCLLCGDPLRVSYIAKKFLQDAKEITNVRNMLGFSGKYKGKGISLMGHGMGIASCTIYVTELIKTYQVKELLRIGTCGAISPKVGLKDIIMAIGASTDSKTNRVRFLNHDLSATPDFELSLRAYQTAKRLGIDLKIGNVFSSDFFYSFETHAFDLMAQYNHLAIEMEAAGLYATAMELSAKALCLCSVSDHLITKEALSPKERVESFDNMITLALEMMS</sequence>